<accession>Q9ADP7</accession>
<sequence length="192" mass="21272">MAARDPEATKARIFEAAVAEFARHGIAGARIDRIAAEARANKQLIYAYYGNKGELFASVLEKKMLDLAISVPVDPDDIEGWIDRLLDYHAAHPELLRLLFWEGMEYGTAELPHEAERQEHYARKVAAVRDGQERGVITDAIPAPDLLFLLVAMANWAVVVPQMKRILVGGGDAGTDGLRDSIKKAARRIVDR</sequence>
<gene>
    <name type="ordered locus">SCO4008</name>
</gene>
<name>HTHR_STRCO</name>
<reference key="1">
    <citation type="journal article" date="2002" name="Nature">
        <title>Complete genome sequence of the model actinomycete Streptomyces coelicolor A3(2).</title>
        <authorList>
            <person name="Bentley S.D."/>
            <person name="Chater K.F."/>
            <person name="Cerdeno-Tarraga A.-M."/>
            <person name="Challis G.L."/>
            <person name="Thomson N.R."/>
            <person name="James K.D."/>
            <person name="Harris D.E."/>
            <person name="Quail M.A."/>
            <person name="Kieser H."/>
            <person name="Harper D."/>
            <person name="Bateman A."/>
            <person name="Brown S."/>
            <person name="Chandra G."/>
            <person name="Chen C.W."/>
            <person name="Collins M."/>
            <person name="Cronin A."/>
            <person name="Fraser A."/>
            <person name="Goble A."/>
            <person name="Hidalgo J."/>
            <person name="Hornsby T."/>
            <person name="Howarth S."/>
            <person name="Huang C.-H."/>
            <person name="Kieser T."/>
            <person name="Larke L."/>
            <person name="Murphy L.D."/>
            <person name="Oliver K."/>
            <person name="O'Neil S."/>
            <person name="Rabbinowitsch E."/>
            <person name="Rajandream M.A."/>
            <person name="Rutherford K.M."/>
            <person name="Rutter S."/>
            <person name="Seeger K."/>
            <person name="Saunders D."/>
            <person name="Sharp S."/>
            <person name="Squares R."/>
            <person name="Squares S."/>
            <person name="Taylor K."/>
            <person name="Warren T."/>
            <person name="Wietzorrek A."/>
            <person name="Woodward J.R."/>
            <person name="Barrell B.G."/>
            <person name="Parkhill J."/>
            <person name="Hopwood D.A."/>
        </authorList>
    </citation>
    <scope>NUCLEOTIDE SEQUENCE [LARGE SCALE GENOMIC DNA]</scope>
    <source>
        <strain>ATCC BAA-471 / A3(2) / M145</strain>
    </source>
</reference>
<reference key="2">
    <citation type="journal article" date="2013" name="J. Mol. Biol.">
        <title>SCO4008, a putative TetR transcriptional repressor from Streptomyces coelicolor A3(2), regulates transcription of sco4007 by multidrug recognition.</title>
        <authorList>
            <person name="Hayashi T."/>
            <person name="Tanaka Y."/>
            <person name="Sakai N."/>
            <person name="Okada U."/>
            <person name="Yao M."/>
            <person name="Watanabe N."/>
            <person name="Tamura T."/>
            <person name="Tanaka I."/>
        </authorList>
    </citation>
    <scope>X-RAY CRYSTALLOGRAPHY (2.30 ANGSTROMS)</scope>
    <scope>FUNCTION</scope>
    <scope>DNA-BINDING</scope>
    <scope>ACTIVITY REGULATION</scope>
    <scope>SUBUNIT</scope>
    <scope>INDUCTION</scope>
    <scope>DOMAIN</scope>
    <source>
        <strain>ATCC BAA-471 / A3(2) / M145</strain>
    </source>
</reference>
<proteinExistence type="evidence at protein level"/>
<feature type="chain" id="PRO_0000426730" description="HTH-type transcriptional repressor SCO4008">
    <location>
        <begin position="1"/>
        <end position="192"/>
    </location>
</feature>
<feature type="domain" description="HTH tetR-type" evidence="1">
    <location>
        <begin position="7"/>
        <end position="67"/>
    </location>
</feature>
<feature type="DNA-binding region" description="H-T-H motif" evidence="3">
    <location>
        <begin position="30"/>
        <end position="49"/>
    </location>
</feature>
<feature type="helix" evidence="5">
    <location>
        <begin position="9"/>
        <end position="24"/>
    </location>
</feature>
<feature type="turn" evidence="5">
    <location>
        <begin position="25"/>
        <end position="27"/>
    </location>
</feature>
<feature type="helix" evidence="5">
    <location>
        <begin position="31"/>
        <end position="38"/>
    </location>
</feature>
<feature type="helix" evidence="5">
    <location>
        <begin position="42"/>
        <end position="49"/>
    </location>
</feature>
<feature type="helix" evidence="5">
    <location>
        <begin position="52"/>
        <end position="70"/>
    </location>
</feature>
<feature type="helix" evidence="5">
    <location>
        <begin position="75"/>
        <end position="77"/>
    </location>
</feature>
<feature type="helix" evidence="5">
    <location>
        <begin position="78"/>
        <end position="91"/>
    </location>
</feature>
<feature type="helix" evidence="5">
    <location>
        <begin position="94"/>
        <end position="106"/>
    </location>
</feature>
<feature type="helix" evidence="5">
    <location>
        <begin position="114"/>
        <end position="133"/>
    </location>
</feature>
<feature type="helix" evidence="5">
    <location>
        <begin position="143"/>
        <end position="159"/>
    </location>
</feature>
<feature type="helix" evidence="5">
    <location>
        <begin position="161"/>
        <end position="168"/>
    </location>
</feature>
<feature type="helix" evidence="5">
    <location>
        <begin position="171"/>
        <end position="190"/>
    </location>
</feature>
<evidence type="ECO:0000255" key="1">
    <source>
        <dbReference type="PROSITE-ProRule" id="PRU00335"/>
    </source>
</evidence>
<evidence type="ECO:0000269" key="2">
    <source>
    </source>
</evidence>
<evidence type="ECO:0000305" key="3"/>
<evidence type="ECO:0000305" key="4">
    <source>
    </source>
</evidence>
<evidence type="ECO:0007829" key="5">
    <source>
        <dbReference type="PDB" id="2D6Y"/>
    </source>
</evidence>
<dbReference type="EMBL" id="AL939118">
    <property type="protein sequence ID" value="CAC32348.1"/>
    <property type="molecule type" value="Genomic_DNA"/>
</dbReference>
<dbReference type="RefSeq" id="NP_628190.1">
    <property type="nucleotide sequence ID" value="NC_003888.3"/>
</dbReference>
<dbReference type="RefSeq" id="WP_011029378.1">
    <property type="nucleotide sequence ID" value="NZ_VNID01000032.1"/>
</dbReference>
<dbReference type="PDB" id="2D6Y">
    <property type="method" value="X-ray"/>
    <property type="resolution" value="2.30 A"/>
    <property type="chains" value="A/B=1-192"/>
</dbReference>
<dbReference type="PDBsum" id="2D6Y"/>
<dbReference type="SMR" id="Q9ADP7"/>
<dbReference type="STRING" id="100226.gene:17761636"/>
<dbReference type="PaxDb" id="100226-SCO4008"/>
<dbReference type="KEGG" id="sco:SCO4008"/>
<dbReference type="PATRIC" id="fig|100226.15.peg.4071"/>
<dbReference type="eggNOG" id="COG1309">
    <property type="taxonomic scope" value="Bacteria"/>
</dbReference>
<dbReference type="HOGENOM" id="CLU_069356_1_2_11"/>
<dbReference type="InParanoid" id="Q9ADP7"/>
<dbReference type="OrthoDB" id="4726108at2"/>
<dbReference type="PhylomeDB" id="Q9ADP7"/>
<dbReference type="EvolutionaryTrace" id="Q9ADP7"/>
<dbReference type="Proteomes" id="UP000001973">
    <property type="component" value="Chromosome"/>
</dbReference>
<dbReference type="GO" id="GO:0003677">
    <property type="term" value="F:DNA binding"/>
    <property type="evidence" value="ECO:0007669"/>
    <property type="project" value="UniProtKB-KW"/>
</dbReference>
<dbReference type="Gene3D" id="1.10.357.10">
    <property type="entry name" value="Tetracycline Repressor, domain 2"/>
    <property type="match status" value="1"/>
</dbReference>
<dbReference type="InterPro" id="IPR009057">
    <property type="entry name" value="Homeodomain-like_sf"/>
</dbReference>
<dbReference type="InterPro" id="IPR050109">
    <property type="entry name" value="HTH-type_TetR-like_transc_reg"/>
</dbReference>
<dbReference type="InterPro" id="IPR001647">
    <property type="entry name" value="HTH_TetR"/>
</dbReference>
<dbReference type="InterPro" id="IPR041467">
    <property type="entry name" value="Sco4008_C"/>
</dbReference>
<dbReference type="InterPro" id="IPR036271">
    <property type="entry name" value="Tet_transcr_reg_TetR-rel_C_sf"/>
</dbReference>
<dbReference type="PANTHER" id="PTHR30328:SF54">
    <property type="entry name" value="HTH-TYPE TRANSCRIPTIONAL REPRESSOR SCO4008"/>
    <property type="match status" value="1"/>
</dbReference>
<dbReference type="PANTHER" id="PTHR30328">
    <property type="entry name" value="TRANSCRIPTIONAL REPRESSOR"/>
    <property type="match status" value="1"/>
</dbReference>
<dbReference type="Pfam" id="PF17926">
    <property type="entry name" value="TetR_C_21"/>
    <property type="match status" value="1"/>
</dbReference>
<dbReference type="Pfam" id="PF00440">
    <property type="entry name" value="TetR_N"/>
    <property type="match status" value="1"/>
</dbReference>
<dbReference type="SUPFAM" id="SSF46689">
    <property type="entry name" value="Homeodomain-like"/>
    <property type="match status" value="1"/>
</dbReference>
<dbReference type="SUPFAM" id="SSF48498">
    <property type="entry name" value="Tetracyclin repressor-like, C-terminal domain"/>
    <property type="match status" value="1"/>
</dbReference>
<dbReference type="PROSITE" id="PS50977">
    <property type="entry name" value="HTH_TETR_2"/>
    <property type="match status" value="1"/>
</dbReference>
<keyword id="KW-0002">3D-structure</keyword>
<keyword id="KW-0238">DNA-binding</keyword>
<keyword id="KW-1185">Reference proteome</keyword>
<keyword id="KW-0678">Repressor</keyword>
<keyword id="KW-0804">Transcription</keyword>
<keyword id="KW-0805">Transcription regulation</keyword>
<comment type="function">
    <text evidence="2">Probably regulates the expression of its own gene and the adjacent SCO4007 gene by binding to two operator sites in the SCO4007-SCO4008 intergenic region.</text>
</comment>
<comment type="activity regulation">
    <text evidence="2">Binding of a wide range of cationic hydrophobic compounds to SCO4008 causes a decrease in DNA-binding, probably via allosteric conformational change of SCO4008.</text>
</comment>
<comment type="subunit">
    <text evidence="2">Homodimer. Four dimers bind to the two operator sites.</text>
</comment>
<comment type="induction">
    <text evidence="4">Autoregulated.</text>
</comment>
<comment type="domain">
    <text evidence="2">Contains an N-terminal DNA-binding domain and a C-terminal dimerization domain.</text>
</comment>
<protein>
    <recommendedName>
        <fullName>HTH-type transcriptional repressor SCO4008</fullName>
    </recommendedName>
</protein>
<organism>
    <name type="scientific">Streptomyces coelicolor (strain ATCC BAA-471 / A3(2) / M145)</name>
    <dbReference type="NCBI Taxonomy" id="100226"/>
    <lineage>
        <taxon>Bacteria</taxon>
        <taxon>Bacillati</taxon>
        <taxon>Actinomycetota</taxon>
        <taxon>Actinomycetes</taxon>
        <taxon>Kitasatosporales</taxon>
        <taxon>Streptomycetaceae</taxon>
        <taxon>Streptomyces</taxon>
        <taxon>Streptomyces albidoflavus group</taxon>
    </lineage>
</organism>